<name>ENSA_BOVIN</name>
<feature type="initiator methionine" description="Removed" evidence="2">
    <location>
        <position position="1"/>
    </location>
</feature>
<feature type="chain" id="PRO_0000146757" description="Alpha-endosulfine">
    <location>
        <begin position="2"/>
        <end position="121"/>
    </location>
</feature>
<feature type="region of interest" description="Disordered" evidence="3">
    <location>
        <begin position="1"/>
        <end position="53"/>
    </location>
</feature>
<feature type="region of interest" description="Disordered" evidence="3">
    <location>
        <begin position="79"/>
        <end position="121"/>
    </location>
</feature>
<feature type="compositionally biased region" description="Basic and acidic residues" evidence="3">
    <location>
        <begin position="16"/>
        <end position="37"/>
    </location>
</feature>
<feature type="modified residue" description="N-acetylserine" evidence="2">
    <location>
        <position position="2"/>
    </location>
</feature>
<feature type="modified residue" description="Phosphoserine" evidence="2">
    <location>
        <position position="2"/>
    </location>
</feature>
<feature type="modified residue" description="Phosphothreonine" evidence="2">
    <location>
        <position position="21"/>
    </location>
</feature>
<feature type="modified residue" description="Phosphoserine" evidence="2">
    <location>
        <position position="43"/>
    </location>
</feature>
<feature type="modified residue" description="Phosphoserine; by GWL" evidence="1">
    <location>
        <position position="67"/>
    </location>
</feature>
<feature type="modified residue" description="Phosphoserine; by PKA" evidence="2">
    <location>
        <position position="109"/>
    </location>
</feature>
<feature type="splice variant" id="VSP_019714" description="In isoform 2." evidence="6">
    <location>
        <begin position="118"/>
        <end position="121"/>
    </location>
</feature>
<feature type="sequence variant" evidence="4 5">
    <original>K</original>
    <variation>R</variation>
    <location>
        <position position="31"/>
    </location>
</feature>
<feature type="sequence conflict" description="In Ref. 2; AAI12683." evidence="7" ref="2">
    <original>A</original>
    <variation>T</variation>
    <location>
        <position position="11"/>
    </location>
</feature>
<accession>P68210</accession>
<accession>O97976</accession>
<accession>Q2KID1</accession>
<accession>Q95105</accession>
<gene>
    <name type="primary">ENSA</name>
</gene>
<sequence length="121" mass="13361">MSQKQEEENPAEETGEEKQDTQEKEGILPEKAEEAKLKAKYPSLGQKPGGSDFLMKRLQKGQKYFDSGDYNMAKAKMKNKQLPSAGPDKNLVTGDHIPTPQDLPQRKSSLVTSKLAGGQVE</sequence>
<protein>
    <recommendedName>
        <fullName>Alpha-endosulfine</fullName>
    </recommendedName>
    <alternativeName>
        <fullName>ARPP-19e</fullName>
    </alternativeName>
</protein>
<dbReference type="EMBL" id="X95958">
    <property type="protein sequence ID" value="CAA65196.1"/>
    <property type="molecule type" value="mRNA"/>
</dbReference>
<dbReference type="EMBL" id="BC112682">
    <property type="protein sequence ID" value="AAI12683.1"/>
    <property type="molecule type" value="mRNA"/>
</dbReference>
<dbReference type="EMBL" id="AJ005986">
    <property type="protein sequence ID" value="CAA06800.1"/>
    <property type="molecule type" value="mRNA"/>
</dbReference>
<dbReference type="PIR" id="JC4878">
    <property type="entry name" value="JC4878"/>
</dbReference>
<dbReference type="RefSeq" id="NP_001300934.1">
    <property type="nucleotide sequence ID" value="NM_001314005.1"/>
</dbReference>
<dbReference type="BMRB" id="P68210"/>
<dbReference type="SMR" id="P68210"/>
<dbReference type="FunCoup" id="P68210">
    <property type="interactions" value="2041"/>
</dbReference>
<dbReference type="STRING" id="9913.ENSBTAP00000009379"/>
<dbReference type="PaxDb" id="9913-ENSBTAP00000009379"/>
<dbReference type="GeneID" id="281142"/>
<dbReference type="KEGG" id="bta:281142"/>
<dbReference type="CTD" id="2029"/>
<dbReference type="eggNOG" id="KOG4076">
    <property type="taxonomic scope" value="Eukaryota"/>
</dbReference>
<dbReference type="HOGENOM" id="CLU_125025_0_1_1"/>
<dbReference type="InParanoid" id="P68210"/>
<dbReference type="OrthoDB" id="5949865at2759"/>
<dbReference type="TreeFam" id="TF314718"/>
<dbReference type="Proteomes" id="UP000009136">
    <property type="component" value="Unplaced"/>
</dbReference>
<dbReference type="GO" id="GO:0005737">
    <property type="term" value="C:cytoplasm"/>
    <property type="evidence" value="ECO:0000318"/>
    <property type="project" value="GO_Central"/>
</dbReference>
<dbReference type="GO" id="GO:0019212">
    <property type="term" value="F:phosphatase inhibitor activity"/>
    <property type="evidence" value="ECO:0000250"/>
    <property type="project" value="UniProtKB"/>
</dbReference>
<dbReference type="GO" id="GO:0051721">
    <property type="term" value="F:protein phosphatase 2A binding"/>
    <property type="evidence" value="ECO:0000250"/>
    <property type="project" value="UniProtKB"/>
</dbReference>
<dbReference type="GO" id="GO:0004864">
    <property type="term" value="F:protein phosphatase inhibitor activity"/>
    <property type="evidence" value="ECO:0000318"/>
    <property type="project" value="GO_Central"/>
</dbReference>
<dbReference type="GO" id="GO:0019888">
    <property type="term" value="F:protein phosphatase regulator activity"/>
    <property type="evidence" value="ECO:0000250"/>
    <property type="project" value="UniProtKB"/>
</dbReference>
<dbReference type="GO" id="GO:0051301">
    <property type="term" value="P:cell division"/>
    <property type="evidence" value="ECO:0007669"/>
    <property type="project" value="UniProtKB-KW"/>
</dbReference>
<dbReference type="GO" id="GO:0000086">
    <property type="term" value="P:G2/M transition of mitotic cell cycle"/>
    <property type="evidence" value="ECO:0000250"/>
    <property type="project" value="UniProtKB"/>
</dbReference>
<dbReference type="GO" id="GO:0000278">
    <property type="term" value="P:mitotic cell cycle"/>
    <property type="evidence" value="ECO:0000250"/>
    <property type="project" value="UniProtKB"/>
</dbReference>
<dbReference type="InterPro" id="IPR006760">
    <property type="entry name" value="Endosulphine"/>
</dbReference>
<dbReference type="PANTHER" id="PTHR10358:SF40">
    <property type="entry name" value="ALPHA-ENDOSULFINE"/>
    <property type="match status" value="1"/>
</dbReference>
<dbReference type="PANTHER" id="PTHR10358">
    <property type="entry name" value="ENDOSULFINE"/>
    <property type="match status" value="1"/>
</dbReference>
<dbReference type="Pfam" id="PF04667">
    <property type="entry name" value="Endosulfine"/>
    <property type="match status" value="1"/>
</dbReference>
<reference key="1">
    <citation type="journal article" date="1998" name="Proc. Natl. Acad. Sci. U.S.A.">
        <title>Human alpha-endosulfine, a possible regulator of sulfonylurea-sensitive K(ATP) channel: molecular cloning, expression and biological properties.</title>
        <authorList>
            <person name="Heron L."/>
            <person name="Virsolvy A."/>
            <person name="Peyrollier K."/>
            <person name="Gribble F.M."/>
            <person name="Le Cam A."/>
            <person name="Ashcroft F.M."/>
            <person name="Bataille D."/>
        </authorList>
    </citation>
    <scope>NUCLEOTIDE SEQUENCE [MRNA] (ISOFORM 1)</scope>
    <scope>VARIANT ARG-31</scope>
    <source>
        <tissue>Brain</tissue>
    </source>
</reference>
<reference key="2">
    <citation type="submission" date="2006-01" db="EMBL/GenBank/DDBJ databases">
        <authorList>
            <consortium name="NIH - Mammalian Gene Collection (MGC) project"/>
        </authorList>
    </citation>
    <scope>NUCLEOTIDE SEQUENCE [LARGE SCALE MRNA] (ISOFORM 2)</scope>
    <scope>VARIANT ARG-31</scope>
    <source>
        <strain>Hereford</strain>
        <tissue>Hypothalamus</tissue>
    </source>
</reference>
<reference key="3">
    <citation type="journal article" date="1996" name="Biochem. Biophys. Res. Commun.">
        <title>Alpha endosulfine is a novel molecule, structurally related to a family of phosphoproteins.</title>
        <authorList>
            <person name="Peyrollier K."/>
            <person name="Heron L."/>
            <person name="Virsolvy-Vergine A."/>
            <person name="Le Cam A."/>
            <person name="Bataille D."/>
        </authorList>
    </citation>
    <scope>NUCLEOTIDE SEQUENCE [MRNA] OF 25-101</scope>
    <source>
        <tissue>Caudate nucleus</tissue>
    </source>
</reference>
<keyword id="KW-0007">Acetylation</keyword>
<keyword id="KW-0025">Alternative splicing</keyword>
<keyword id="KW-0131">Cell cycle</keyword>
<keyword id="KW-0132">Cell division</keyword>
<keyword id="KW-0963">Cytoplasm</keyword>
<keyword id="KW-0498">Mitosis</keyword>
<keyword id="KW-0597">Phosphoprotein</keyword>
<keyword id="KW-0650">Protein phosphatase inhibitor</keyword>
<keyword id="KW-1185">Reference proteome</keyword>
<organism>
    <name type="scientific">Bos taurus</name>
    <name type="common">Bovine</name>
    <dbReference type="NCBI Taxonomy" id="9913"/>
    <lineage>
        <taxon>Eukaryota</taxon>
        <taxon>Metazoa</taxon>
        <taxon>Chordata</taxon>
        <taxon>Craniata</taxon>
        <taxon>Vertebrata</taxon>
        <taxon>Euteleostomi</taxon>
        <taxon>Mammalia</taxon>
        <taxon>Eutheria</taxon>
        <taxon>Laurasiatheria</taxon>
        <taxon>Artiodactyla</taxon>
        <taxon>Ruminantia</taxon>
        <taxon>Pecora</taxon>
        <taxon>Bovidae</taxon>
        <taxon>Bovinae</taxon>
        <taxon>Bos</taxon>
    </lineage>
</organism>
<evidence type="ECO:0000250" key="1"/>
<evidence type="ECO:0000250" key="2">
    <source>
        <dbReference type="UniProtKB" id="O43768"/>
    </source>
</evidence>
<evidence type="ECO:0000256" key="3">
    <source>
        <dbReference type="SAM" id="MobiDB-lite"/>
    </source>
</evidence>
<evidence type="ECO:0000269" key="4">
    <source>
    </source>
</evidence>
<evidence type="ECO:0000269" key="5">
    <source ref="2"/>
</evidence>
<evidence type="ECO:0000303" key="6">
    <source ref="2"/>
</evidence>
<evidence type="ECO:0000305" key="7"/>
<comment type="function">
    <text evidence="1">Protein phosphatase inhibitor that specifically inhibits protein phosphatase 2A (PP2A) during mitosis. When phosphorylated at Ser-67 during mitosis, specifically interacts with PPP2R2D (PR55-delta) and inhibits its activity, leading to inactivation of PP2A, an essential condition to keep cyclin-B1-CDK1 activity high during M phase. Also acts as a stimulator of insulin secretion by interacting with sulfonylurea receptor (ABCC8), thereby preventing sulfonylurea from binding to its receptor and reducing K(ATP) channel currents (By similarity).</text>
</comment>
<comment type="subunit">
    <text evidence="1">Interacts (when phosphorylated at Ser-67) with PPP2R2D. Interacts with ABCC8. Interacts with SNCA; interaction is disrupted when phosphorylated at Ser-109 (By similarity).</text>
</comment>
<comment type="subcellular location">
    <subcellularLocation>
        <location evidence="1">Cytoplasm</location>
    </subcellularLocation>
</comment>
<comment type="alternative products">
    <event type="alternative splicing"/>
    <isoform>
        <id>P68210-1</id>
        <name>1</name>
        <sequence type="displayed"/>
    </isoform>
    <isoform>
        <id>P68210-2</id>
        <name>2</name>
        <sequence type="described" ref="VSP_019714"/>
    </isoform>
</comment>
<comment type="PTM">
    <text evidence="1">Phosphorylation at Ser-67 by GWL during mitosis is essential for interaction with PPP2R2D (PR55-delta) and subsequent inactivation of PP2A. Phosphorylated by PKA (By similarity).</text>
</comment>
<comment type="similarity">
    <text evidence="7">Belongs to the endosulfine family.</text>
</comment>
<proteinExistence type="evidence at transcript level"/>